<sequence>MDKIFVDEAVSELHTIQDMLRWAVSRFSAANIWYGHGTDNPWDEAVQLVLPSLYLPLDIPEDMRTARLTSSEKHRIVERVIRRINERIPVAYLTNKAWFCGHEFYVDERVLVPRSPIGELINNHFAGLISQQPKYILDMCTGSGCIAIACAYAFPDAEVDAVDISPDALAVAEHNIEEHGLIHHVTPIRSDLFRDLPKVQYDLIVTNPPYVDAEDMSDLPNEYRHEPELGLASGTDGLKLTRRILGNAPDYLSDDGVLICEVGNSMVHLMEQYPDVPFTWLEFDNGGDGVFMLTKAQLLAAREHFNIYKD</sequence>
<dbReference type="EC" id="2.1.1.298" evidence="1"/>
<dbReference type="EMBL" id="AL513382">
    <property type="protein sequence ID" value="CAD07617.1"/>
    <property type="molecule type" value="Genomic_DNA"/>
</dbReference>
<dbReference type="EMBL" id="AE014613">
    <property type="protein sequence ID" value="AAO68186.1"/>
    <property type="molecule type" value="Genomic_DNA"/>
</dbReference>
<dbReference type="RefSeq" id="NP_456926.1">
    <property type="nucleotide sequence ID" value="NC_003198.1"/>
</dbReference>
<dbReference type="RefSeq" id="WP_001542329.1">
    <property type="nucleotide sequence ID" value="NZ_WSUR01000045.1"/>
</dbReference>
<dbReference type="SMR" id="P0A294"/>
<dbReference type="STRING" id="220341.gene:17586514"/>
<dbReference type="KEGG" id="stt:t0479"/>
<dbReference type="KEGG" id="sty:STY2617"/>
<dbReference type="PATRIC" id="fig|220341.7.peg.2650"/>
<dbReference type="eggNOG" id="COG2890">
    <property type="taxonomic scope" value="Bacteria"/>
</dbReference>
<dbReference type="HOGENOM" id="CLU_018398_5_1_6"/>
<dbReference type="OMA" id="IYYGHGT"/>
<dbReference type="Proteomes" id="UP000000541">
    <property type="component" value="Chromosome"/>
</dbReference>
<dbReference type="Proteomes" id="UP000002670">
    <property type="component" value="Chromosome"/>
</dbReference>
<dbReference type="GO" id="GO:0005829">
    <property type="term" value="C:cytosol"/>
    <property type="evidence" value="ECO:0007669"/>
    <property type="project" value="TreeGrafter"/>
</dbReference>
<dbReference type="GO" id="GO:0003676">
    <property type="term" value="F:nucleic acid binding"/>
    <property type="evidence" value="ECO:0007669"/>
    <property type="project" value="InterPro"/>
</dbReference>
<dbReference type="GO" id="GO:0036009">
    <property type="term" value="F:protein-glutamine N-methyltransferase activity"/>
    <property type="evidence" value="ECO:0007669"/>
    <property type="project" value="UniProtKB-UniRule"/>
</dbReference>
<dbReference type="GO" id="GO:0032259">
    <property type="term" value="P:methylation"/>
    <property type="evidence" value="ECO:0007669"/>
    <property type="project" value="UniProtKB-KW"/>
</dbReference>
<dbReference type="CDD" id="cd02440">
    <property type="entry name" value="AdoMet_MTases"/>
    <property type="match status" value="1"/>
</dbReference>
<dbReference type="FunFam" id="1.10.8.10:FF:000022">
    <property type="entry name" value="50S ribosomal protein L3 glutamine methyltransferase"/>
    <property type="match status" value="1"/>
</dbReference>
<dbReference type="FunFam" id="3.40.50.150:FF:000042">
    <property type="entry name" value="50S ribosomal protein L3 glutamine methyltransferase"/>
    <property type="match status" value="1"/>
</dbReference>
<dbReference type="Gene3D" id="1.10.8.10">
    <property type="entry name" value="DNA helicase RuvA subunit, C-terminal domain"/>
    <property type="match status" value="1"/>
</dbReference>
<dbReference type="Gene3D" id="3.40.50.150">
    <property type="entry name" value="Vaccinia Virus protein VP39"/>
    <property type="match status" value="1"/>
</dbReference>
<dbReference type="HAMAP" id="MF_02125">
    <property type="entry name" value="L3_methyltr_PrmB"/>
    <property type="match status" value="1"/>
</dbReference>
<dbReference type="InterPro" id="IPR002052">
    <property type="entry name" value="DNA_methylase_N6_adenine_CS"/>
</dbReference>
<dbReference type="InterPro" id="IPR004556">
    <property type="entry name" value="HemK-like"/>
</dbReference>
<dbReference type="InterPro" id="IPR017127">
    <property type="entry name" value="Ribosome_uL3_MTase"/>
</dbReference>
<dbReference type="InterPro" id="IPR029063">
    <property type="entry name" value="SAM-dependent_MTases_sf"/>
</dbReference>
<dbReference type="InterPro" id="IPR007848">
    <property type="entry name" value="Small_mtfrase_dom"/>
</dbReference>
<dbReference type="NCBIfam" id="TIGR00536">
    <property type="entry name" value="hemK_fam"/>
    <property type="match status" value="1"/>
</dbReference>
<dbReference type="NCBIfam" id="TIGR03533">
    <property type="entry name" value="L3_gln_methyl"/>
    <property type="match status" value="1"/>
</dbReference>
<dbReference type="PANTHER" id="PTHR47806">
    <property type="entry name" value="50S RIBOSOMAL PROTEIN L3 GLUTAMINE METHYLTRANSFERASE"/>
    <property type="match status" value="1"/>
</dbReference>
<dbReference type="PANTHER" id="PTHR47806:SF1">
    <property type="entry name" value="RIBOSOMAL PROTEIN UL3 GLUTAMINE METHYLTRANSFERASE"/>
    <property type="match status" value="1"/>
</dbReference>
<dbReference type="Pfam" id="PF05175">
    <property type="entry name" value="MTS"/>
    <property type="match status" value="1"/>
</dbReference>
<dbReference type="PIRSF" id="PIRSF037167">
    <property type="entry name" value="Mtase_YfcB_prd"/>
    <property type="match status" value="1"/>
</dbReference>
<dbReference type="SUPFAM" id="SSF53335">
    <property type="entry name" value="S-adenosyl-L-methionine-dependent methyltransferases"/>
    <property type="match status" value="1"/>
</dbReference>
<organism>
    <name type="scientific">Salmonella typhi</name>
    <dbReference type="NCBI Taxonomy" id="90370"/>
    <lineage>
        <taxon>Bacteria</taxon>
        <taxon>Pseudomonadati</taxon>
        <taxon>Pseudomonadota</taxon>
        <taxon>Gammaproteobacteria</taxon>
        <taxon>Enterobacterales</taxon>
        <taxon>Enterobacteriaceae</taxon>
        <taxon>Salmonella</taxon>
    </lineage>
</organism>
<name>PRMB_SALTI</name>
<comment type="function">
    <text evidence="1">Specifically methylates large ribosomal subunit protein uL3 on 'Gln-150'.</text>
</comment>
<comment type="catalytic activity">
    <reaction evidence="1">
        <text>L-glutaminyl-[ribosomal protein uL3] + S-adenosyl-L-methionine = N(5)-methyl-L-glutaminyl-[ribosomal protein uL3] + S-adenosyl-L-homocysteine + H(+)</text>
        <dbReference type="Rhea" id="RHEA:45020"/>
        <dbReference type="Rhea" id="RHEA-COMP:11063"/>
        <dbReference type="Rhea" id="RHEA-COMP:11064"/>
        <dbReference type="ChEBI" id="CHEBI:15378"/>
        <dbReference type="ChEBI" id="CHEBI:30011"/>
        <dbReference type="ChEBI" id="CHEBI:57856"/>
        <dbReference type="ChEBI" id="CHEBI:59789"/>
        <dbReference type="ChEBI" id="CHEBI:61891"/>
        <dbReference type="EC" id="2.1.1.298"/>
    </reaction>
</comment>
<comment type="similarity">
    <text evidence="1">Belongs to the protein N5-glutamine methyltransferase family. PrmB subfamily.</text>
</comment>
<comment type="sequence caution" evidence="3">
    <conflict type="frameshift" ref="3"/>
</comment>
<keyword id="KW-0489">Methyltransferase</keyword>
<keyword id="KW-0949">S-adenosyl-L-methionine</keyword>
<keyword id="KW-0808">Transferase</keyword>
<protein>
    <recommendedName>
        <fullName evidence="1">Ribosomal protein uL3 glutamine methyltransferase</fullName>
        <shortName evidence="1">uL3 MTase</shortName>
        <ecNumber evidence="1">2.1.1.298</ecNumber>
    </recommendedName>
    <alternativeName>
        <fullName evidence="1">N5-glutamine methyltransferase PrmB</fullName>
    </alternativeName>
</protein>
<accession>P0A294</accession>
<accession>P39201</accession>
<evidence type="ECO:0000255" key="1">
    <source>
        <dbReference type="HAMAP-Rule" id="MF_02125"/>
    </source>
</evidence>
<evidence type="ECO:0000303" key="2">
    <source>
    </source>
</evidence>
<evidence type="ECO:0000305" key="3"/>
<proteinExistence type="inferred from homology"/>
<gene>
    <name evidence="1" type="primary">prmB</name>
    <name evidence="2" type="synonym">yfcB</name>
    <name type="ordered locus">STY2617</name>
    <name type="ordered locus">t0479</name>
</gene>
<feature type="chain" id="PRO_0000088004" description="Ribosomal protein uL3 glutamine methyltransferase">
    <location>
        <begin position="1"/>
        <end position="310"/>
    </location>
</feature>
<reference key="1">
    <citation type="journal article" date="2001" name="Nature">
        <title>Complete genome sequence of a multiple drug resistant Salmonella enterica serovar Typhi CT18.</title>
        <authorList>
            <person name="Parkhill J."/>
            <person name="Dougan G."/>
            <person name="James K.D."/>
            <person name="Thomson N.R."/>
            <person name="Pickard D."/>
            <person name="Wain J."/>
            <person name="Churcher C.M."/>
            <person name="Mungall K.L."/>
            <person name="Bentley S.D."/>
            <person name="Holden M.T.G."/>
            <person name="Sebaihia M."/>
            <person name="Baker S."/>
            <person name="Basham D."/>
            <person name="Brooks K."/>
            <person name="Chillingworth T."/>
            <person name="Connerton P."/>
            <person name="Cronin A."/>
            <person name="Davis P."/>
            <person name="Davies R.M."/>
            <person name="Dowd L."/>
            <person name="White N."/>
            <person name="Farrar J."/>
            <person name="Feltwell T."/>
            <person name="Hamlin N."/>
            <person name="Haque A."/>
            <person name="Hien T.T."/>
            <person name="Holroyd S."/>
            <person name="Jagels K."/>
            <person name="Krogh A."/>
            <person name="Larsen T.S."/>
            <person name="Leather S."/>
            <person name="Moule S."/>
            <person name="O'Gaora P."/>
            <person name="Parry C."/>
            <person name="Quail M.A."/>
            <person name="Rutherford K.M."/>
            <person name="Simmonds M."/>
            <person name="Skelton J."/>
            <person name="Stevens K."/>
            <person name="Whitehead S."/>
            <person name="Barrell B.G."/>
        </authorList>
    </citation>
    <scope>NUCLEOTIDE SEQUENCE [LARGE SCALE GENOMIC DNA]</scope>
    <source>
        <strain>CT18</strain>
    </source>
</reference>
<reference key="2">
    <citation type="journal article" date="2003" name="J. Bacteriol.">
        <title>Comparative genomics of Salmonella enterica serovar Typhi strains Ty2 and CT18.</title>
        <authorList>
            <person name="Deng W."/>
            <person name="Liou S.-R."/>
            <person name="Plunkett G. III"/>
            <person name="Mayhew G.F."/>
            <person name="Rose D.J."/>
            <person name="Burland V."/>
            <person name="Kodoyianni V."/>
            <person name="Schwartz D.C."/>
            <person name="Blattner F.R."/>
        </authorList>
    </citation>
    <scope>NUCLEOTIDE SEQUENCE [LARGE SCALE GENOMIC DNA]</scope>
    <source>
        <strain>ATCC 700931 / Ty2</strain>
    </source>
</reference>
<reference key="3">
    <citation type="journal article" date="1990" name="J. Gen. Microbiol.">
        <title>Isolation, characterization and nucleotide sequences of the aroC genes encoding chorismate synthase from Salmonella typhi and Escherichia coli.</title>
        <authorList>
            <person name="Charles I.G."/>
            <person name="Lamb H.K."/>
            <person name="Pickard D."/>
            <person name="Dougan G."/>
            <person name="Hawkins A.R."/>
        </authorList>
    </citation>
    <scope>NUCLEOTIDE SEQUENCE [GENOMIC DNA] OF 225-310</scope>
    <source>
        <strain>ATCC 700931 / Ty2</strain>
    </source>
</reference>
<reference key="4">
    <citation type="journal article" date="1994" name="Nucleic Acids Res.">
        <title>Intrinsic and extrinsic approaches for detecting genes in a bacterial genome.</title>
        <authorList>
            <person name="Borodovsky M."/>
            <person name="Rudd K.E."/>
            <person name="Koonin E.V."/>
        </authorList>
    </citation>
    <scope>IDENTIFICATION</scope>
    <scope>CONCEPTUAL TRANSLATION</scope>
</reference>